<sequence>MAQVRALHKIMALFSANSIGAMNNSDTRIAGCFLTGIPGLEQLHIWLSIPFCIMYITALEGNGILICVILSQAILHEPMYIFLSMLASADVLLSTTTMPKALANLWLGYSLISFDGCLTQMFFIHFLFIHSAVLLAMAFDRYVAICSPLRYVTILTSKVIGKIVTAALSHSFIIMFPSIFLLEHLHYCQINIIAHTFCEHMGIAHLSCSDISINVWYGLAAALLSTGLDIMLITVSYIHILQAVFRLLSQDARSKALSTCGSHICVILLFYVPALFSVFAYRFGGRSVPCYVHILLASLYVVIPPMLNPVIYGVRTKPILEGAKQMFSNLAKGSK</sequence>
<comment type="function">
    <text evidence="3">Odorant receptor.</text>
</comment>
<comment type="subcellular location">
    <subcellularLocation>
        <location>Cell membrane</location>
        <topology>Multi-pass membrane protein</topology>
    </subcellularLocation>
</comment>
<comment type="similarity">
    <text evidence="2">Belongs to the G-protein coupled receptor 1 family.</text>
</comment>
<comment type="caution">
    <text evidence="3">It is uncertain whether Met-1 or Met-22 is the initiator.</text>
</comment>
<comment type="online information" name="Human Olfactory Receptor Data Exploratorium (HORDE)">
    <link uri="http://genome.weizmann.ac.il/horde/card/index/symbol:OR52B6"/>
</comment>
<reference key="1">
    <citation type="submission" date="2001-07" db="EMBL/GenBank/DDBJ databases">
        <title>Genome-wide discovery and analysis of human seven transmembrane helix receptor genes.</title>
        <authorList>
            <person name="Suwa M."/>
            <person name="Sato T."/>
            <person name="Okouchi I."/>
            <person name="Arita M."/>
            <person name="Futami K."/>
            <person name="Matsumoto S."/>
            <person name="Tsutsumi S."/>
            <person name="Aburatani H."/>
            <person name="Asai K."/>
            <person name="Akiyama Y."/>
        </authorList>
    </citation>
    <scope>NUCLEOTIDE SEQUENCE [GENOMIC DNA]</scope>
</reference>
<reference key="2">
    <citation type="journal article" date="2006" name="Nature">
        <title>Human chromosome 11 DNA sequence and analysis including novel gene identification.</title>
        <authorList>
            <person name="Taylor T.D."/>
            <person name="Noguchi H."/>
            <person name="Totoki Y."/>
            <person name="Toyoda A."/>
            <person name="Kuroki Y."/>
            <person name="Dewar K."/>
            <person name="Lloyd C."/>
            <person name="Itoh T."/>
            <person name="Takeda T."/>
            <person name="Kim D.-W."/>
            <person name="She X."/>
            <person name="Barlow K.F."/>
            <person name="Bloom T."/>
            <person name="Bruford E."/>
            <person name="Chang J.L."/>
            <person name="Cuomo C.A."/>
            <person name="Eichler E."/>
            <person name="FitzGerald M.G."/>
            <person name="Jaffe D.B."/>
            <person name="LaButti K."/>
            <person name="Nicol R."/>
            <person name="Park H.-S."/>
            <person name="Seaman C."/>
            <person name="Sougnez C."/>
            <person name="Yang X."/>
            <person name="Zimmer A.R."/>
            <person name="Zody M.C."/>
            <person name="Birren B.W."/>
            <person name="Nusbaum C."/>
            <person name="Fujiyama A."/>
            <person name="Hattori M."/>
            <person name="Rogers J."/>
            <person name="Lander E.S."/>
            <person name="Sakaki Y."/>
        </authorList>
    </citation>
    <scope>NUCLEOTIDE SEQUENCE [LARGE SCALE GENOMIC DNA]</scope>
</reference>
<reference key="3">
    <citation type="journal article" date="2004" name="Proc. Natl. Acad. Sci. U.S.A.">
        <title>The human olfactory receptor gene family.</title>
        <authorList>
            <person name="Malnic B."/>
            <person name="Godfrey P.A."/>
            <person name="Buck L.B."/>
        </authorList>
    </citation>
    <scope>IDENTIFICATION</scope>
</reference>
<reference key="4">
    <citation type="journal article" date="2004" name="Proc. Natl. Acad. Sci. U.S.A.">
        <authorList>
            <person name="Malnic B."/>
            <person name="Godfrey P.A."/>
            <person name="Buck L.B."/>
        </authorList>
    </citation>
    <scope>ERRATUM OF PUBMED:14983052</scope>
</reference>
<accession>Q8NGF0</accession>
<accession>Q6IFI7</accession>
<protein>
    <recommendedName>
        <fullName>Olfactory receptor 52B6</fullName>
    </recommendedName>
    <alternativeName>
        <fullName>Olfactory receptor OR11-47</fullName>
    </alternativeName>
</protein>
<dbReference type="EMBL" id="AB065858">
    <property type="protein sequence ID" value="BAC06076.1"/>
    <property type="molecule type" value="Genomic_DNA"/>
</dbReference>
<dbReference type="EMBL" id="AC015691">
    <property type="status" value="NOT_ANNOTATED_CDS"/>
    <property type="molecule type" value="Genomic_DNA"/>
</dbReference>
<dbReference type="EMBL" id="BK004275">
    <property type="protein sequence ID" value="DAA04673.1"/>
    <property type="molecule type" value="Genomic_DNA"/>
</dbReference>
<dbReference type="CCDS" id="CCDS41611.1"/>
<dbReference type="RefSeq" id="NP_001005162.2">
    <property type="nucleotide sequence ID" value="NM_001005162.2"/>
</dbReference>
<dbReference type="SMR" id="Q8NGF0"/>
<dbReference type="FunCoup" id="Q8NGF0">
    <property type="interactions" value="447"/>
</dbReference>
<dbReference type="STRING" id="9606.ENSP00000341581"/>
<dbReference type="GlyCosmos" id="Q8NGF0">
    <property type="glycosylation" value="1 site, No reported glycans"/>
</dbReference>
<dbReference type="GlyGen" id="Q8NGF0">
    <property type="glycosylation" value="1 site"/>
</dbReference>
<dbReference type="iPTMnet" id="Q8NGF0"/>
<dbReference type="PhosphoSitePlus" id="Q8NGF0"/>
<dbReference type="BioMuta" id="OR52B6"/>
<dbReference type="DMDM" id="218512128"/>
<dbReference type="PaxDb" id="9606-ENSP00000341581"/>
<dbReference type="Antibodypedia" id="70926">
    <property type="antibodies" value="27 antibodies from 13 providers"/>
</dbReference>
<dbReference type="DNASU" id="340980"/>
<dbReference type="Ensembl" id="ENST00000345043.2">
    <property type="protein sequence ID" value="ENSP00000341581.2"/>
    <property type="gene ID" value="ENSG00000187747.2"/>
</dbReference>
<dbReference type="GeneID" id="340980"/>
<dbReference type="KEGG" id="hsa:340980"/>
<dbReference type="MANE-Select" id="ENST00000345043.2">
    <property type="protein sequence ID" value="ENSP00000341581.2"/>
    <property type="RefSeq nucleotide sequence ID" value="NM_001005162.2"/>
    <property type="RefSeq protein sequence ID" value="NP_001005162.2"/>
</dbReference>
<dbReference type="UCSC" id="uc010qzi.2">
    <property type="organism name" value="human"/>
</dbReference>
<dbReference type="AGR" id="HGNC:15211"/>
<dbReference type="CTD" id="340980"/>
<dbReference type="GeneCards" id="OR52B6"/>
<dbReference type="HGNC" id="HGNC:15211">
    <property type="gene designation" value="OR52B6"/>
</dbReference>
<dbReference type="HPA" id="ENSG00000187747">
    <property type="expression patterns" value="Not detected"/>
</dbReference>
<dbReference type="neXtProt" id="NX_Q8NGF0"/>
<dbReference type="PharmGKB" id="PA32400"/>
<dbReference type="VEuPathDB" id="HostDB:ENSG00000187747"/>
<dbReference type="eggNOG" id="ENOG502QV28">
    <property type="taxonomic scope" value="Eukaryota"/>
</dbReference>
<dbReference type="GeneTree" id="ENSGT01090000260043"/>
<dbReference type="HOGENOM" id="CLU_012526_0_0_1"/>
<dbReference type="InParanoid" id="Q8NGF0"/>
<dbReference type="OMA" id="HKIMALF"/>
<dbReference type="OrthoDB" id="5969463at2759"/>
<dbReference type="PAN-GO" id="Q8NGF0">
    <property type="GO annotations" value="0 GO annotations based on evolutionary models"/>
</dbReference>
<dbReference type="PhylomeDB" id="Q8NGF0"/>
<dbReference type="TreeFam" id="TF343679"/>
<dbReference type="PathwayCommons" id="Q8NGF0"/>
<dbReference type="Reactome" id="R-HSA-381753">
    <property type="pathway name" value="Olfactory Signaling Pathway"/>
</dbReference>
<dbReference type="Reactome" id="R-HSA-9752946">
    <property type="pathway name" value="Expression and translocation of olfactory receptors"/>
</dbReference>
<dbReference type="BioGRID-ORCS" id="340980">
    <property type="hits" value="6 hits in 743 CRISPR screens"/>
</dbReference>
<dbReference type="GeneWiki" id="OR52B6"/>
<dbReference type="GenomeRNAi" id="340980"/>
<dbReference type="Pharos" id="Q8NGF0">
    <property type="development level" value="Tdark"/>
</dbReference>
<dbReference type="PRO" id="PR:Q8NGF0"/>
<dbReference type="Proteomes" id="UP000005640">
    <property type="component" value="Chromosome 11"/>
</dbReference>
<dbReference type="RNAct" id="Q8NGF0">
    <property type="molecule type" value="protein"/>
</dbReference>
<dbReference type="Bgee" id="ENSG00000187747">
    <property type="expression patterns" value="Expressed in sural nerve and 6 other cell types or tissues"/>
</dbReference>
<dbReference type="GO" id="GO:0005886">
    <property type="term" value="C:plasma membrane"/>
    <property type="evidence" value="ECO:0000318"/>
    <property type="project" value="GO_Central"/>
</dbReference>
<dbReference type="GO" id="GO:0004930">
    <property type="term" value="F:G protein-coupled receptor activity"/>
    <property type="evidence" value="ECO:0007669"/>
    <property type="project" value="UniProtKB-KW"/>
</dbReference>
<dbReference type="GO" id="GO:0004984">
    <property type="term" value="F:olfactory receptor activity"/>
    <property type="evidence" value="ECO:0000318"/>
    <property type="project" value="GO_Central"/>
</dbReference>
<dbReference type="CDD" id="cd15221">
    <property type="entry name" value="7tmA_OR52B-like"/>
    <property type="match status" value="1"/>
</dbReference>
<dbReference type="FunFam" id="1.20.1070.10:FF:000006">
    <property type="entry name" value="Olfactory receptor"/>
    <property type="match status" value="1"/>
</dbReference>
<dbReference type="Gene3D" id="1.20.1070.10">
    <property type="entry name" value="Rhodopsin 7-helix transmembrane proteins"/>
    <property type="match status" value="1"/>
</dbReference>
<dbReference type="InterPro" id="IPR000276">
    <property type="entry name" value="GPCR_Rhodpsn"/>
</dbReference>
<dbReference type="InterPro" id="IPR017452">
    <property type="entry name" value="GPCR_Rhodpsn_7TM"/>
</dbReference>
<dbReference type="InterPro" id="IPR000725">
    <property type="entry name" value="Olfact_rcpt"/>
</dbReference>
<dbReference type="InterPro" id="IPR050402">
    <property type="entry name" value="OR51/52/56-like"/>
</dbReference>
<dbReference type="PANTHER" id="PTHR26450:SF32">
    <property type="entry name" value="OLFACTORY RECEPTOR 52B6"/>
    <property type="match status" value="1"/>
</dbReference>
<dbReference type="PANTHER" id="PTHR26450">
    <property type="entry name" value="OLFACTORY RECEPTOR 56B1-RELATED"/>
    <property type="match status" value="1"/>
</dbReference>
<dbReference type="Pfam" id="PF13853">
    <property type="entry name" value="7tm_4"/>
    <property type="match status" value="1"/>
</dbReference>
<dbReference type="PRINTS" id="PR00237">
    <property type="entry name" value="GPCRRHODOPSN"/>
</dbReference>
<dbReference type="PRINTS" id="PR00245">
    <property type="entry name" value="OLFACTORYR"/>
</dbReference>
<dbReference type="SUPFAM" id="SSF81321">
    <property type="entry name" value="Family A G protein-coupled receptor-like"/>
    <property type="match status" value="1"/>
</dbReference>
<dbReference type="PROSITE" id="PS50262">
    <property type="entry name" value="G_PROTEIN_RECEP_F1_2"/>
    <property type="match status" value="1"/>
</dbReference>
<feature type="chain" id="PRO_0000150769" description="Olfactory receptor 52B6">
    <location>
        <begin position="1"/>
        <end position="335"/>
    </location>
</feature>
<feature type="topological domain" description="Extracellular" evidence="1">
    <location>
        <begin position="1"/>
        <end position="45"/>
    </location>
</feature>
<feature type="transmembrane region" description="Helical; Name=1" evidence="1">
    <location>
        <begin position="46"/>
        <end position="66"/>
    </location>
</feature>
<feature type="topological domain" description="Cytoplasmic" evidence="1">
    <location>
        <begin position="67"/>
        <end position="74"/>
    </location>
</feature>
<feature type="transmembrane region" description="Helical; Name=2" evidence="1">
    <location>
        <begin position="75"/>
        <end position="95"/>
    </location>
</feature>
<feature type="topological domain" description="Extracellular" evidence="1">
    <location>
        <begin position="96"/>
        <end position="119"/>
    </location>
</feature>
<feature type="transmembrane region" description="Helical; Name=3" evidence="1">
    <location>
        <begin position="120"/>
        <end position="139"/>
    </location>
</feature>
<feature type="topological domain" description="Cytoplasmic" evidence="1">
    <location>
        <begin position="140"/>
        <end position="158"/>
    </location>
</feature>
<feature type="transmembrane region" description="Helical; Name=4" evidence="1">
    <location>
        <begin position="159"/>
        <end position="179"/>
    </location>
</feature>
<feature type="topological domain" description="Extracellular" evidence="1">
    <location>
        <begin position="180"/>
        <end position="215"/>
    </location>
</feature>
<feature type="transmembrane region" description="Helical; Name=5" evidence="1">
    <location>
        <begin position="216"/>
        <end position="236"/>
    </location>
</feature>
<feature type="topological domain" description="Cytoplasmic" evidence="1">
    <location>
        <begin position="237"/>
        <end position="256"/>
    </location>
</feature>
<feature type="transmembrane region" description="Helical; Name=6" evidence="1">
    <location>
        <begin position="257"/>
        <end position="277"/>
    </location>
</feature>
<feature type="topological domain" description="Extracellular" evidence="1">
    <location>
        <begin position="278"/>
        <end position="293"/>
    </location>
</feature>
<feature type="transmembrane region" description="Helical; Name=7" evidence="1">
    <location>
        <begin position="294"/>
        <end position="314"/>
    </location>
</feature>
<feature type="topological domain" description="Cytoplasmic" evidence="1">
    <location>
        <begin position="315"/>
        <end position="335"/>
    </location>
</feature>
<feature type="glycosylation site" description="N-linked (GlcNAc...) asparagine" evidence="1">
    <location>
        <position position="23"/>
    </location>
</feature>
<feature type="disulfide bond" evidence="2">
    <location>
        <begin position="117"/>
        <end position="208"/>
    </location>
</feature>
<feature type="sequence variant" id="VAR_048077" description="In dbSNP:rs1077126.">
    <original>T</original>
    <variation>A</variation>
    <location>
        <position position="57"/>
    </location>
</feature>
<feature type="sequence variant" id="VAR_048078" description="In dbSNP:rs2341432.">
    <original>L</original>
    <variation>H</variation>
    <location>
        <position position="111"/>
    </location>
</feature>
<feature type="sequence variant" id="VAR_048079" description="In dbSNP:rs2341433.">
    <original>A</original>
    <variation>T</variation>
    <location>
        <position position="167"/>
    </location>
</feature>
<feature type="sequence variant" id="VAR_048080" description="In dbSNP:rs2341434.">
    <original>H</original>
    <variation>R</variation>
    <location>
        <position position="170"/>
    </location>
</feature>
<feature type="sequence variant" id="VAR_048081" description="In dbSNP:rs10769086.">
    <original>V</original>
    <variation>I</variation>
    <location>
        <position position="288"/>
    </location>
</feature>
<name>O52B6_HUMAN</name>
<gene>
    <name type="primary">OR52B6</name>
</gene>
<evidence type="ECO:0000255" key="1"/>
<evidence type="ECO:0000255" key="2">
    <source>
        <dbReference type="PROSITE-ProRule" id="PRU00521"/>
    </source>
</evidence>
<evidence type="ECO:0000305" key="3"/>
<keyword id="KW-1003">Cell membrane</keyword>
<keyword id="KW-1015">Disulfide bond</keyword>
<keyword id="KW-0297">G-protein coupled receptor</keyword>
<keyword id="KW-0325">Glycoprotein</keyword>
<keyword id="KW-0472">Membrane</keyword>
<keyword id="KW-0552">Olfaction</keyword>
<keyword id="KW-0675">Receptor</keyword>
<keyword id="KW-1185">Reference proteome</keyword>
<keyword id="KW-0716">Sensory transduction</keyword>
<keyword id="KW-0807">Transducer</keyword>
<keyword id="KW-0812">Transmembrane</keyword>
<keyword id="KW-1133">Transmembrane helix</keyword>
<organism>
    <name type="scientific">Homo sapiens</name>
    <name type="common">Human</name>
    <dbReference type="NCBI Taxonomy" id="9606"/>
    <lineage>
        <taxon>Eukaryota</taxon>
        <taxon>Metazoa</taxon>
        <taxon>Chordata</taxon>
        <taxon>Craniata</taxon>
        <taxon>Vertebrata</taxon>
        <taxon>Euteleostomi</taxon>
        <taxon>Mammalia</taxon>
        <taxon>Eutheria</taxon>
        <taxon>Euarchontoglires</taxon>
        <taxon>Primates</taxon>
        <taxon>Haplorrhini</taxon>
        <taxon>Catarrhini</taxon>
        <taxon>Hominidae</taxon>
        <taxon>Homo</taxon>
    </lineage>
</organism>
<proteinExistence type="inferred from homology"/>